<comment type="function">
    <text evidence="1">Nitric oxide-sensitive repressor of genes involved in protecting the cell against nitrosative stress. May require iron for activity.</text>
</comment>
<comment type="cofactor">
    <cofactor evidence="1">
        <name>[2Fe-2S] cluster</name>
        <dbReference type="ChEBI" id="CHEBI:190135"/>
    </cofactor>
    <text evidence="1">Binds 1 [2Fe-2S] cluster per subunit.</text>
</comment>
<feature type="chain" id="PRO_0000109559" description="HTH-type transcriptional repressor NsrR">
    <location>
        <begin position="1"/>
        <end position="141"/>
    </location>
</feature>
<feature type="domain" description="HTH rrf2-type" evidence="1">
    <location>
        <begin position="2"/>
        <end position="129"/>
    </location>
</feature>
<feature type="DNA-binding region" description="H-T-H motif" evidence="1">
    <location>
        <begin position="28"/>
        <end position="51"/>
    </location>
</feature>
<feature type="binding site" evidence="1">
    <location>
        <position position="91"/>
    </location>
    <ligand>
        <name>[2Fe-2S] cluster</name>
        <dbReference type="ChEBI" id="CHEBI:190135"/>
    </ligand>
</feature>
<feature type="binding site" evidence="1">
    <location>
        <position position="96"/>
    </location>
    <ligand>
        <name>[2Fe-2S] cluster</name>
        <dbReference type="ChEBI" id="CHEBI:190135"/>
    </ligand>
</feature>
<feature type="binding site" evidence="1">
    <location>
        <position position="102"/>
    </location>
    <ligand>
        <name>[2Fe-2S] cluster</name>
        <dbReference type="ChEBI" id="CHEBI:190135"/>
    </ligand>
</feature>
<evidence type="ECO:0000255" key="1">
    <source>
        <dbReference type="HAMAP-Rule" id="MF_01177"/>
    </source>
</evidence>
<accession>P40610</accession>
<protein>
    <recommendedName>
        <fullName evidence="1">HTH-type transcriptional repressor NsrR</fullName>
    </recommendedName>
</protein>
<dbReference type="EMBL" id="U09005">
    <property type="protein sequence ID" value="AAA62191.1"/>
    <property type="molecule type" value="Genomic_DNA"/>
</dbReference>
<dbReference type="EMBL" id="BA000031">
    <property type="protein sequence ID" value="BAC61071.1"/>
    <property type="molecule type" value="Genomic_DNA"/>
</dbReference>
<dbReference type="RefSeq" id="NP_799187.1">
    <property type="nucleotide sequence ID" value="NC_004603.1"/>
</dbReference>
<dbReference type="RefSeq" id="WP_005460673.1">
    <property type="nucleotide sequence ID" value="NC_004603.1"/>
</dbReference>
<dbReference type="SMR" id="P40610"/>
<dbReference type="GeneID" id="1190358"/>
<dbReference type="KEGG" id="vpa:VP2808"/>
<dbReference type="PATRIC" id="fig|223926.6.peg.2700"/>
<dbReference type="eggNOG" id="COG1959">
    <property type="taxonomic scope" value="Bacteria"/>
</dbReference>
<dbReference type="HOGENOM" id="CLU_107144_2_0_6"/>
<dbReference type="Proteomes" id="UP000002493">
    <property type="component" value="Chromosome 1"/>
</dbReference>
<dbReference type="GO" id="GO:0005829">
    <property type="term" value="C:cytosol"/>
    <property type="evidence" value="ECO:0007669"/>
    <property type="project" value="TreeGrafter"/>
</dbReference>
<dbReference type="GO" id="GO:0051537">
    <property type="term" value="F:2 iron, 2 sulfur cluster binding"/>
    <property type="evidence" value="ECO:0007669"/>
    <property type="project" value="UniProtKB-KW"/>
</dbReference>
<dbReference type="GO" id="GO:0003700">
    <property type="term" value="F:DNA-binding transcription factor activity"/>
    <property type="evidence" value="ECO:0007669"/>
    <property type="project" value="UniProtKB-UniRule"/>
</dbReference>
<dbReference type="GO" id="GO:0003690">
    <property type="term" value="F:double-stranded DNA binding"/>
    <property type="evidence" value="ECO:0007669"/>
    <property type="project" value="UniProtKB-UniRule"/>
</dbReference>
<dbReference type="GO" id="GO:0005506">
    <property type="term" value="F:iron ion binding"/>
    <property type="evidence" value="ECO:0007669"/>
    <property type="project" value="UniProtKB-UniRule"/>
</dbReference>
<dbReference type="GO" id="GO:0045892">
    <property type="term" value="P:negative regulation of DNA-templated transcription"/>
    <property type="evidence" value="ECO:0007669"/>
    <property type="project" value="InterPro"/>
</dbReference>
<dbReference type="FunFam" id="1.10.10.10:FF:000105">
    <property type="entry name" value="HTH-type transcriptional repressor NsrR"/>
    <property type="match status" value="1"/>
</dbReference>
<dbReference type="Gene3D" id="1.10.10.10">
    <property type="entry name" value="Winged helix-like DNA-binding domain superfamily/Winged helix DNA-binding domain"/>
    <property type="match status" value="1"/>
</dbReference>
<dbReference type="HAMAP" id="MF_01177">
    <property type="entry name" value="HTH_type_NsrR"/>
    <property type="match status" value="1"/>
</dbReference>
<dbReference type="InterPro" id="IPR030489">
    <property type="entry name" value="TR_Rrf2-type_CS"/>
</dbReference>
<dbReference type="InterPro" id="IPR000944">
    <property type="entry name" value="Tscrpt_reg_Rrf2"/>
</dbReference>
<dbReference type="InterPro" id="IPR023761">
    <property type="entry name" value="Tscrpt_rep_HTH_NsrR"/>
</dbReference>
<dbReference type="InterPro" id="IPR036388">
    <property type="entry name" value="WH-like_DNA-bd_sf"/>
</dbReference>
<dbReference type="InterPro" id="IPR036390">
    <property type="entry name" value="WH_DNA-bd_sf"/>
</dbReference>
<dbReference type="NCBIfam" id="NF008240">
    <property type="entry name" value="PRK11014.1"/>
    <property type="match status" value="1"/>
</dbReference>
<dbReference type="NCBIfam" id="TIGR00738">
    <property type="entry name" value="rrf2_super"/>
    <property type="match status" value="1"/>
</dbReference>
<dbReference type="PANTHER" id="PTHR33221:SF4">
    <property type="entry name" value="HTH-TYPE TRANSCRIPTIONAL REPRESSOR NSRR"/>
    <property type="match status" value="1"/>
</dbReference>
<dbReference type="PANTHER" id="PTHR33221">
    <property type="entry name" value="WINGED HELIX-TURN-HELIX TRANSCRIPTIONAL REGULATOR, RRF2 FAMILY"/>
    <property type="match status" value="1"/>
</dbReference>
<dbReference type="Pfam" id="PF02082">
    <property type="entry name" value="Rrf2"/>
    <property type="match status" value="1"/>
</dbReference>
<dbReference type="SUPFAM" id="SSF46785">
    <property type="entry name" value="Winged helix' DNA-binding domain"/>
    <property type="match status" value="1"/>
</dbReference>
<dbReference type="PROSITE" id="PS01332">
    <property type="entry name" value="HTH_RRF2_1"/>
    <property type="match status" value="1"/>
</dbReference>
<dbReference type="PROSITE" id="PS51197">
    <property type="entry name" value="HTH_RRF2_2"/>
    <property type="match status" value="1"/>
</dbReference>
<name>NSRR_VIBPA</name>
<reference key="1">
    <citation type="submission" date="1994-04" db="EMBL/GenBank/DDBJ databases">
        <authorList>
            <person name="McCarter L.L."/>
        </authorList>
    </citation>
    <scope>NUCLEOTIDE SEQUENCE [GENOMIC DNA]</scope>
    <source>
        <strain>BB22</strain>
    </source>
</reference>
<reference key="2">
    <citation type="journal article" date="2003" name="Lancet">
        <title>Genome sequence of Vibrio parahaemolyticus: a pathogenic mechanism distinct from that of V. cholerae.</title>
        <authorList>
            <person name="Makino K."/>
            <person name="Oshima K."/>
            <person name="Kurokawa K."/>
            <person name="Yokoyama K."/>
            <person name="Uda T."/>
            <person name="Tagomori K."/>
            <person name="Iijima Y."/>
            <person name="Najima M."/>
            <person name="Nakano M."/>
            <person name="Yamashita A."/>
            <person name="Kubota Y."/>
            <person name="Kimura S."/>
            <person name="Yasunaga T."/>
            <person name="Honda T."/>
            <person name="Shinagawa H."/>
            <person name="Hattori M."/>
            <person name="Iida T."/>
        </authorList>
    </citation>
    <scope>NUCLEOTIDE SEQUENCE [LARGE SCALE GENOMIC DNA]</scope>
    <source>
        <strain>RIMD 2210633</strain>
    </source>
</reference>
<sequence>MQLTSFTDYALRTLIYLASLPKDELTNITEVTDLFGVSRNHMVKVINRLGQLGYVHTVRGKNGGIRLMKPASEITVGGVVRDLEPLDLVNCGVEFCHITPACRLKDKLAKAKSAFLAELDECTIESLLSDNSELLILLARP</sequence>
<gene>
    <name evidence="1" type="primary">nsrR</name>
    <name type="synonym">yjeB</name>
    <name type="ordered locus">VP2808</name>
</gene>
<organism>
    <name type="scientific">Vibrio parahaemolyticus serotype O3:K6 (strain RIMD 2210633)</name>
    <dbReference type="NCBI Taxonomy" id="223926"/>
    <lineage>
        <taxon>Bacteria</taxon>
        <taxon>Pseudomonadati</taxon>
        <taxon>Pseudomonadota</taxon>
        <taxon>Gammaproteobacteria</taxon>
        <taxon>Vibrionales</taxon>
        <taxon>Vibrionaceae</taxon>
        <taxon>Vibrio</taxon>
    </lineage>
</organism>
<keyword id="KW-0001">2Fe-2S</keyword>
<keyword id="KW-0238">DNA-binding</keyword>
<keyword id="KW-0408">Iron</keyword>
<keyword id="KW-0411">Iron-sulfur</keyword>
<keyword id="KW-0479">Metal-binding</keyword>
<keyword id="KW-0678">Repressor</keyword>
<keyword id="KW-0804">Transcription</keyword>
<keyword id="KW-0805">Transcription regulation</keyword>
<proteinExistence type="inferred from homology"/>